<accession>Q9VGG5</accession>
<accession>Q8MQL5</accession>
<evidence type="ECO:0000250" key="1"/>
<evidence type="ECO:0000255" key="2"/>
<evidence type="ECO:0000255" key="3">
    <source>
        <dbReference type="PROSITE-ProRule" id="PRU00043"/>
    </source>
</evidence>
<evidence type="ECO:0000256" key="4">
    <source>
        <dbReference type="SAM" id="MobiDB-lite"/>
    </source>
</evidence>
<evidence type="ECO:0000269" key="5">
    <source>
    </source>
</evidence>
<evidence type="ECO:0000305" key="6"/>
<gene>
    <name type="primary">Cad87A</name>
    <name type="ORF">CG6977</name>
</gene>
<sequence length="1975" mass="217557">MKLPLGLLMICLGLTLAKGETNLPPVFTQTLNNIILYENVTVGTVVFRLEAYDPEGSPVTYGAIGADHFSVDPVSGNITLIKPLDREEKDTLKFLVSIRDRVDPEGESERDNVVEVPITFIILDLNDNPPEFQNTPYEADVNEDAAVGTTIFDKITVKDRDIVGESLDLKCLPQQQSPEACRKFRLHIIKRDATILEAAVVLNDTLNYNQRMVYHFQIEATDGPHKTQTTFEARVKDVQDKPPVFQGSLSTVIDEDSPINTLVLTVHARDGDTGEPRKIVYDLRTNPNDYFLLDAQTGELRTAKPLDREALEDSTGIISLVIRARELVNGVPSDDPLTSATAKATVTIRDVNDSPPVFNHKEYSVSLLENTLPGTPLALDMSVSDADVGINSKFALRLDDVSGVFDVEPKLVTGYSQVNIRVANGTLDYENPNQRKFIVLVVAEETDTNPRLSSTATITVSVLDANDNKPVFEQESYSASVSEAALPGQYIATITARDVDSGSYGDSGIRYSLSGTGAELFHVNEQTGVISLANCHDNGESNRRERRDLNEDEHVEEDDGEGHLEMLSMEAATREIGTEPTVQYTLITQAPEEQASSVPLPAPVPHAAPSGVPAATANDDKAPQTCLDYESETTYFLSYKATDDNGRGSASVVSLRISVTDANDSPPVCESPLYRASVDEGAVVFDSPLIVKARDADTMSRISYRIRGSEQVESIFDIDRETGQIIIRPNATLDVTNLNSDQLIFAVEANDGLFTAHCGVNITVRDVNNHVPNFEQQSYSAVVEENSEIGTSVERVHATDLDTGKNAELRYRIQQGSFDDFGIVETTGEVFVSRKLDFDRRNTYQLQIQASDQGTPSLTGTATLTINVQNSNDKDPYFVPATQHAEVRADAPPGQLVYTLIALDPDVANHNALEFAGTDDITAIDKEGKELPHYDQFKEYFKISRNGKVSVNKQLDRNLFAVMRINVLVTDSTAPNVQQGRGLLIIQIIDVNKNPPRFNAPWSVEQPQIKLQMVEEQPVGTVLTTLQANDEDSSIGEFNISDNDYFAINQTSGMIYTIARLDYEVVKEVKFQVTVSDTGVPALTATADVVVDIINLNDNDPKFSQSDYYFNVTENSPRGTVAGKVEAHDGDVGVFGEITYTLIGENNKYFSIDAYTGNVMVANSSILDREQIKELTLSVVAQDKAPAAVQKSATATIHINILDVNDNAPVFTRDVYNSTVAENAAYQPPAALLQVQAIDQDEGLYGDVRYIITAGNEMGLFKLDAQSGIVYPAQSLSGKHGAYELTISARDTQGSGTMESTTKAIITVLRVNRHKPEFVIPALSNATIEIPGDIVQPDYLLLTVRAMDNDTEENGKVSYHLQVNNRNEQQTGEFKIDEVTGELRAKTQLNRKNRANYDIILVARDAGNPPFESLRLLSVSIVDANENRPEFPDASNPYKVSINENSGRDVKIGHIQAASRSKHNRDIFYYMLLGNEDGAFYVDKLTGDIYTNKSLDREETDVYTLYILASIKADLHISEEERASFSIKTLNRDNTVAKVAITVLDVNDNPPVFEKPIYYAGVNANAKMGAAITLVNATDADQGKNAKIEFMIVASNLYKFGATKSTGSIVPSPFAISQDGRISANTIMAEYNQDRFELEIVARELEQPQSSASTKVNIWVFDGTQLVRVILSRPPEEVYQEQEEIIAELRNATQHRIIVDEIRFHLDSIGRIRMDWCDLYFHAVDPQTQQIAPVDEILKDIDRNYDYLKDYYAGFAIENVVPAYIAIVQDEFDLAVAGLVALVIVLFVGVISFIVLCCCLKHWNLSVPVETRRKEALIKKQIIEDLNTTENPLWIEQKLKLYEEQELTMQVFSEPDHISNSEAPGHLDHRSSLEQVHHVGQTVDNTYATIQPRNNQNRLTGGGGAGGGSMRSGGGASAGGVGGAGLLLARVDPHMNEFADYATLRNNRAPSLYEFTGSTFQAPIRDGDDAVAELI</sequence>
<organism>
    <name type="scientific">Drosophila melanogaster</name>
    <name type="common">Fruit fly</name>
    <dbReference type="NCBI Taxonomy" id="7227"/>
    <lineage>
        <taxon>Eukaryota</taxon>
        <taxon>Metazoa</taxon>
        <taxon>Ecdysozoa</taxon>
        <taxon>Arthropoda</taxon>
        <taxon>Hexapoda</taxon>
        <taxon>Insecta</taxon>
        <taxon>Pterygota</taxon>
        <taxon>Neoptera</taxon>
        <taxon>Endopterygota</taxon>
        <taxon>Diptera</taxon>
        <taxon>Brachycera</taxon>
        <taxon>Muscomorpha</taxon>
        <taxon>Ephydroidea</taxon>
        <taxon>Drosophilidae</taxon>
        <taxon>Drosophila</taxon>
        <taxon>Sophophora</taxon>
    </lineage>
</organism>
<proteinExistence type="evidence at protein level"/>
<reference key="1">
    <citation type="journal article" date="2000" name="Science">
        <title>The genome sequence of Drosophila melanogaster.</title>
        <authorList>
            <person name="Adams M.D."/>
            <person name="Celniker S.E."/>
            <person name="Holt R.A."/>
            <person name="Evans C.A."/>
            <person name="Gocayne J.D."/>
            <person name="Amanatides P.G."/>
            <person name="Scherer S.E."/>
            <person name="Li P.W."/>
            <person name="Hoskins R.A."/>
            <person name="Galle R.F."/>
            <person name="George R.A."/>
            <person name="Lewis S.E."/>
            <person name="Richards S."/>
            <person name="Ashburner M."/>
            <person name="Henderson S.N."/>
            <person name="Sutton G.G."/>
            <person name="Wortman J.R."/>
            <person name="Yandell M.D."/>
            <person name="Zhang Q."/>
            <person name="Chen L.X."/>
            <person name="Brandon R.C."/>
            <person name="Rogers Y.-H.C."/>
            <person name="Blazej R.G."/>
            <person name="Champe M."/>
            <person name="Pfeiffer B.D."/>
            <person name="Wan K.H."/>
            <person name="Doyle C."/>
            <person name="Baxter E.G."/>
            <person name="Helt G."/>
            <person name="Nelson C.R."/>
            <person name="Miklos G.L.G."/>
            <person name="Abril J.F."/>
            <person name="Agbayani A."/>
            <person name="An H.-J."/>
            <person name="Andrews-Pfannkoch C."/>
            <person name="Baldwin D."/>
            <person name="Ballew R.M."/>
            <person name="Basu A."/>
            <person name="Baxendale J."/>
            <person name="Bayraktaroglu L."/>
            <person name="Beasley E.M."/>
            <person name="Beeson K.Y."/>
            <person name="Benos P.V."/>
            <person name="Berman B.P."/>
            <person name="Bhandari D."/>
            <person name="Bolshakov S."/>
            <person name="Borkova D."/>
            <person name="Botchan M.R."/>
            <person name="Bouck J."/>
            <person name="Brokstein P."/>
            <person name="Brottier P."/>
            <person name="Burtis K.C."/>
            <person name="Busam D.A."/>
            <person name="Butler H."/>
            <person name="Cadieu E."/>
            <person name="Center A."/>
            <person name="Chandra I."/>
            <person name="Cherry J.M."/>
            <person name="Cawley S."/>
            <person name="Dahlke C."/>
            <person name="Davenport L.B."/>
            <person name="Davies P."/>
            <person name="de Pablos B."/>
            <person name="Delcher A."/>
            <person name="Deng Z."/>
            <person name="Mays A.D."/>
            <person name="Dew I."/>
            <person name="Dietz S.M."/>
            <person name="Dodson K."/>
            <person name="Doup L.E."/>
            <person name="Downes M."/>
            <person name="Dugan-Rocha S."/>
            <person name="Dunkov B.C."/>
            <person name="Dunn P."/>
            <person name="Durbin K.J."/>
            <person name="Evangelista C.C."/>
            <person name="Ferraz C."/>
            <person name="Ferriera S."/>
            <person name="Fleischmann W."/>
            <person name="Fosler C."/>
            <person name="Gabrielian A.E."/>
            <person name="Garg N.S."/>
            <person name="Gelbart W.M."/>
            <person name="Glasser K."/>
            <person name="Glodek A."/>
            <person name="Gong F."/>
            <person name="Gorrell J.H."/>
            <person name="Gu Z."/>
            <person name="Guan P."/>
            <person name="Harris M."/>
            <person name="Harris N.L."/>
            <person name="Harvey D.A."/>
            <person name="Heiman T.J."/>
            <person name="Hernandez J.R."/>
            <person name="Houck J."/>
            <person name="Hostin D."/>
            <person name="Houston K.A."/>
            <person name="Howland T.J."/>
            <person name="Wei M.-H."/>
            <person name="Ibegwam C."/>
            <person name="Jalali M."/>
            <person name="Kalush F."/>
            <person name="Karpen G.H."/>
            <person name="Ke Z."/>
            <person name="Kennison J.A."/>
            <person name="Ketchum K.A."/>
            <person name="Kimmel B.E."/>
            <person name="Kodira C.D."/>
            <person name="Kraft C.L."/>
            <person name="Kravitz S."/>
            <person name="Kulp D."/>
            <person name="Lai Z."/>
            <person name="Lasko P."/>
            <person name="Lei Y."/>
            <person name="Levitsky A.A."/>
            <person name="Li J.H."/>
            <person name="Li Z."/>
            <person name="Liang Y."/>
            <person name="Lin X."/>
            <person name="Liu X."/>
            <person name="Mattei B."/>
            <person name="McIntosh T.C."/>
            <person name="McLeod M.P."/>
            <person name="McPherson D."/>
            <person name="Merkulov G."/>
            <person name="Milshina N.V."/>
            <person name="Mobarry C."/>
            <person name="Morris J."/>
            <person name="Moshrefi A."/>
            <person name="Mount S.M."/>
            <person name="Moy M."/>
            <person name="Murphy B."/>
            <person name="Murphy L."/>
            <person name="Muzny D.M."/>
            <person name="Nelson D.L."/>
            <person name="Nelson D.R."/>
            <person name="Nelson K.A."/>
            <person name="Nixon K."/>
            <person name="Nusskern D.R."/>
            <person name="Pacleb J.M."/>
            <person name="Palazzolo M."/>
            <person name="Pittman G.S."/>
            <person name="Pan S."/>
            <person name="Pollard J."/>
            <person name="Puri V."/>
            <person name="Reese M.G."/>
            <person name="Reinert K."/>
            <person name="Remington K."/>
            <person name="Saunders R.D.C."/>
            <person name="Scheeler F."/>
            <person name="Shen H."/>
            <person name="Shue B.C."/>
            <person name="Siden-Kiamos I."/>
            <person name="Simpson M."/>
            <person name="Skupski M.P."/>
            <person name="Smith T.J."/>
            <person name="Spier E."/>
            <person name="Spradling A.C."/>
            <person name="Stapleton M."/>
            <person name="Strong R."/>
            <person name="Sun E."/>
            <person name="Svirskas R."/>
            <person name="Tector C."/>
            <person name="Turner R."/>
            <person name="Venter E."/>
            <person name="Wang A.H."/>
            <person name="Wang X."/>
            <person name="Wang Z.-Y."/>
            <person name="Wassarman D.A."/>
            <person name="Weinstock G.M."/>
            <person name="Weissenbach J."/>
            <person name="Williams S.M."/>
            <person name="Woodage T."/>
            <person name="Worley K.C."/>
            <person name="Wu D."/>
            <person name="Yang S."/>
            <person name="Yao Q.A."/>
            <person name="Ye J."/>
            <person name="Yeh R.-F."/>
            <person name="Zaveri J.S."/>
            <person name="Zhan M."/>
            <person name="Zhang G."/>
            <person name="Zhao Q."/>
            <person name="Zheng L."/>
            <person name="Zheng X.H."/>
            <person name="Zhong F.N."/>
            <person name="Zhong W."/>
            <person name="Zhou X."/>
            <person name="Zhu S.C."/>
            <person name="Zhu X."/>
            <person name="Smith H.O."/>
            <person name="Gibbs R.A."/>
            <person name="Myers E.W."/>
            <person name="Rubin G.M."/>
            <person name="Venter J.C."/>
        </authorList>
    </citation>
    <scope>NUCLEOTIDE SEQUENCE [LARGE SCALE GENOMIC DNA]</scope>
    <source>
        <strain>Berkeley</strain>
    </source>
</reference>
<reference key="2">
    <citation type="journal article" date="2002" name="Genome Biol.">
        <title>Annotation of the Drosophila melanogaster euchromatic genome: a systematic review.</title>
        <authorList>
            <person name="Misra S."/>
            <person name="Crosby M.A."/>
            <person name="Mungall C.J."/>
            <person name="Matthews B.B."/>
            <person name="Campbell K.S."/>
            <person name="Hradecky P."/>
            <person name="Huang Y."/>
            <person name="Kaminker J.S."/>
            <person name="Millburn G.H."/>
            <person name="Prochnik S.E."/>
            <person name="Smith C.D."/>
            <person name="Tupy J.L."/>
            <person name="Whitfield E.J."/>
            <person name="Bayraktaroglu L."/>
            <person name="Berman B.P."/>
            <person name="Bettencourt B.R."/>
            <person name="Celniker S.E."/>
            <person name="de Grey A.D.N.J."/>
            <person name="Drysdale R.A."/>
            <person name="Harris N.L."/>
            <person name="Richter J."/>
            <person name="Russo S."/>
            <person name="Schroeder A.J."/>
            <person name="Shu S.Q."/>
            <person name="Stapleton M."/>
            <person name="Yamada C."/>
            <person name="Ashburner M."/>
            <person name="Gelbart W.M."/>
            <person name="Rubin G.M."/>
            <person name="Lewis S.E."/>
        </authorList>
    </citation>
    <scope>GENOME REANNOTATION</scope>
    <source>
        <strain>Berkeley</strain>
    </source>
</reference>
<reference key="3">
    <citation type="journal article" date="2002" name="Genome Biol.">
        <title>A Drosophila full-length cDNA resource.</title>
        <authorList>
            <person name="Stapleton M."/>
            <person name="Carlson J.W."/>
            <person name="Brokstein P."/>
            <person name="Yu C."/>
            <person name="Champe M."/>
            <person name="George R.A."/>
            <person name="Guarin H."/>
            <person name="Kronmiller B."/>
            <person name="Pacleb J.M."/>
            <person name="Park S."/>
            <person name="Wan K.H."/>
            <person name="Rubin G.M."/>
            <person name="Celniker S.E."/>
        </authorList>
    </citation>
    <scope>NUCLEOTIDE SEQUENCE [LARGE SCALE MRNA] OF 443-1975</scope>
    <source>
        <strain>Berkeley</strain>
        <tissue>Embryo</tissue>
    </source>
</reference>
<reference key="4">
    <citation type="journal article" date="2007" name="Glycobiology">
        <title>Identification of N-glycosylated proteins from the central nervous system of Drosophila melanogaster.</title>
        <authorList>
            <person name="Koles K."/>
            <person name="Lim J.-M."/>
            <person name="Aoki K."/>
            <person name="Porterfield M."/>
            <person name="Tiemeyer M."/>
            <person name="Wells L."/>
            <person name="Panin V."/>
        </authorList>
    </citation>
    <scope>GLYCOSYLATION [LARGE SCALE ANALYSIS] AT ASN-424 AND ASN-1576</scope>
    <scope>IDENTIFICATION BY MASS SPECTROMETRY</scope>
    <source>
        <strain>Oregon-R</strain>
        <tissue>Head</tissue>
    </source>
</reference>
<protein>
    <recommendedName>
        <fullName>Cadherin-87A</fullName>
    </recommendedName>
</protein>
<keyword id="KW-0106">Calcium</keyword>
<keyword id="KW-0130">Cell adhesion</keyword>
<keyword id="KW-1003">Cell membrane</keyword>
<keyword id="KW-0325">Glycoprotein</keyword>
<keyword id="KW-0472">Membrane</keyword>
<keyword id="KW-0479">Metal-binding</keyword>
<keyword id="KW-1185">Reference proteome</keyword>
<keyword id="KW-0677">Repeat</keyword>
<keyword id="KW-0732">Signal</keyword>
<keyword id="KW-0812">Transmembrane</keyword>
<keyword id="KW-1133">Transmembrane helix</keyword>
<name>CAD87_DROME</name>
<comment type="function">
    <text evidence="1">Cadherins are calcium-dependent cell adhesion proteins. They preferentially interact with themselves in a homophilic manner in connecting cells (By similarity).</text>
</comment>
<comment type="subcellular location">
    <subcellularLocation>
        <location evidence="6">Cell membrane</location>
        <topology evidence="6">Single-pass type I membrane protein</topology>
    </subcellularLocation>
</comment>
<comment type="domain">
    <text evidence="1">Three calcium ions are usually bound at the interface of each cadherin domain and rigidify the connections, imparting a strong curvature to the full-length ectodomain.</text>
</comment>
<dbReference type="EMBL" id="AE014297">
    <property type="protein sequence ID" value="AAF54717.4"/>
    <property type="molecule type" value="Genomic_DNA"/>
</dbReference>
<dbReference type="EMBL" id="AY128505">
    <property type="protein sequence ID" value="AAM75098.1"/>
    <property type="molecule type" value="mRNA"/>
</dbReference>
<dbReference type="RefSeq" id="NP_731649.2">
    <property type="nucleotide sequence ID" value="NM_169440.3"/>
</dbReference>
<dbReference type="SMR" id="Q9VGG5"/>
<dbReference type="BioGRID" id="66559">
    <property type="interactions" value="1"/>
</dbReference>
<dbReference type="FunCoup" id="Q9VGG5">
    <property type="interactions" value="186"/>
</dbReference>
<dbReference type="IntAct" id="Q9VGG5">
    <property type="interactions" value="2"/>
</dbReference>
<dbReference type="STRING" id="7227.FBpp0081987"/>
<dbReference type="GlyCosmos" id="Q9VGG5">
    <property type="glycosylation" value="16 sites, No reported glycans"/>
</dbReference>
<dbReference type="GlyGen" id="Q9VGG5">
    <property type="glycosylation" value="17 sites"/>
</dbReference>
<dbReference type="iPTMnet" id="Q9VGG5"/>
<dbReference type="PaxDb" id="7227-FBpp0081987"/>
<dbReference type="EnsemblMetazoa" id="FBtr0082513">
    <property type="protein sequence ID" value="FBpp0081987"/>
    <property type="gene ID" value="FBgn0037963"/>
</dbReference>
<dbReference type="GeneID" id="41441"/>
<dbReference type="KEGG" id="dme:Dmel_CG6977"/>
<dbReference type="UCSC" id="CG6977-RA">
    <property type="organism name" value="d. melanogaster"/>
</dbReference>
<dbReference type="AGR" id="FB:FBgn0037963"/>
<dbReference type="CTD" id="41441"/>
<dbReference type="FlyBase" id="FBgn0037963">
    <property type="gene designation" value="Cad87A"/>
</dbReference>
<dbReference type="VEuPathDB" id="VectorBase:FBgn0037963"/>
<dbReference type="eggNOG" id="KOG3594">
    <property type="taxonomic scope" value="Eukaryota"/>
</dbReference>
<dbReference type="HOGENOM" id="CLU_001354_1_0_1"/>
<dbReference type="InParanoid" id="Q9VGG5"/>
<dbReference type="OMA" id="HIRREWC"/>
<dbReference type="OrthoDB" id="9990384at2759"/>
<dbReference type="PhylomeDB" id="Q9VGG5"/>
<dbReference type="SignaLink" id="Q9VGG5"/>
<dbReference type="BioGRID-ORCS" id="41441">
    <property type="hits" value="0 hits in 1 CRISPR screen"/>
</dbReference>
<dbReference type="GenomeRNAi" id="41441"/>
<dbReference type="PRO" id="PR:Q9VGG5"/>
<dbReference type="Proteomes" id="UP000000803">
    <property type="component" value="Chromosome 3R"/>
</dbReference>
<dbReference type="Bgee" id="FBgn0037963">
    <property type="expression patterns" value="Expressed in dorsal appendage forming follicle cell in ovary and 199 other cell types or tissues"/>
</dbReference>
<dbReference type="GO" id="GO:0005886">
    <property type="term" value="C:plasma membrane"/>
    <property type="evidence" value="ECO:0000250"/>
    <property type="project" value="FlyBase"/>
</dbReference>
<dbReference type="GO" id="GO:0005509">
    <property type="term" value="F:calcium ion binding"/>
    <property type="evidence" value="ECO:0000255"/>
    <property type="project" value="FlyBase"/>
</dbReference>
<dbReference type="GO" id="GO:0016339">
    <property type="term" value="P:calcium-dependent cell-cell adhesion via plasma membrane cell adhesion molecules"/>
    <property type="evidence" value="ECO:0000250"/>
    <property type="project" value="FlyBase"/>
</dbReference>
<dbReference type="GO" id="GO:0007155">
    <property type="term" value="P:cell adhesion"/>
    <property type="evidence" value="ECO:0000318"/>
    <property type="project" value="GO_Central"/>
</dbReference>
<dbReference type="GO" id="GO:0044331">
    <property type="term" value="P:cell-cell adhesion mediated by cadherin"/>
    <property type="evidence" value="ECO:0000255"/>
    <property type="project" value="FlyBase"/>
</dbReference>
<dbReference type="GO" id="GO:0007156">
    <property type="term" value="P:homophilic cell adhesion via plasma membrane adhesion molecules"/>
    <property type="evidence" value="ECO:0007669"/>
    <property type="project" value="InterPro"/>
</dbReference>
<dbReference type="CDD" id="cd11304">
    <property type="entry name" value="Cadherin_repeat"/>
    <property type="match status" value="13"/>
</dbReference>
<dbReference type="FunFam" id="2.60.40.60:FF:000443">
    <property type="entry name" value="AGAP003579-PA"/>
    <property type="match status" value="1"/>
</dbReference>
<dbReference type="FunFam" id="2.60.40.60:FF:000141">
    <property type="entry name" value="Cadherin 23"/>
    <property type="match status" value="1"/>
</dbReference>
<dbReference type="FunFam" id="2.60.40.60:FF:000306">
    <property type="entry name" value="Cadherin 23"/>
    <property type="match status" value="1"/>
</dbReference>
<dbReference type="FunFam" id="2.60.40.60:FF:000394">
    <property type="entry name" value="Cadherin 23"/>
    <property type="match status" value="1"/>
</dbReference>
<dbReference type="FunFam" id="2.60.40.60:FF:000296">
    <property type="entry name" value="Cadherin 74A, isoform A"/>
    <property type="match status" value="1"/>
</dbReference>
<dbReference type="FunFam" id="2.60.40.60:FF:000098">
    <property type="entry name" value="cadherin-23 isoform X1"/>
    <property type="match status" value="1"/>
</dbReference>
<dbReference type="FunFam" id="2.60.40.60:FF:000378">
    <property type="entry name" value="Cadherin-87A"/>
    <property type="match status" value="1"/>
</dbReference>
<dbReference type="FunFam" id="2.60.40.60:FF:000124">
    <property type="entry name" value="Cadherin-related family member 1"/>
    <property type="match status" value="1"/>
</dbReference>
<dbReference type="FunFam" id="2.60.40.60:FF:000168">
    <property type="entry name" value="Cadherin-related family member 2"/>
    <property type="match status" value="1"/>
</dbReference>
<dbReference type="FunFam" id="2.60.40.60:FF:000474">
    <property type="entry name" value="GD20623"/>
    <property type="match status" value="1"/>
</dbReference>
<dbReference type="FunFam" id="2.60.40.60:FF:000514">
    <property type="entry name" value="GD20623"/>
    <property type="match status" value="1"/>
</dbReference>
<dbReference type="FunFam" id="2.60.40.60:FF:000445">
    <property type="entry name" value="GG17179"/>
    <property type="match status" value="1"/>
</dbReference>
<dbReference type="FunFam" id="2.60.40.60:FF:000118">
    <property type="entry name" value="protocadherin Fat 4"/>
    <property type="match status" value="1"/>
</dbReference>
<dbReference type="Gene3D" id="2.60.40.60">
    <property type="entry name" value="Cadherins"/>
    <property type="match status" value="15"/>
</dbReference>
<dbReference type="InterPro" id="IPR002126">
    <property type="entry name" value="Cadherin-like_dom"/>
</dbReference>
<dbReference type="InterPro" id="IPR015919">
    <property type="entry name" value="Cadherin-like_sf"/>
</dbReference>
<dbReference type="InterPro" id="IPR020894">
    <property type="entry name" value="Cadherin_CS"/>
</dbReference>
<dbReference type="PANTHER" id="PTHR24026">
    <property type="entry name" value="FAT ATYPICAL CADHERIN-RELATED"/>
    <property type="match status" value="1"/>
</dbReference>
<dbReference type="PANTHER" id="PTHR24026:SF126">
    <property type="entry name" value="PROTOCADHERIN FAT 4"/>
    <property type="match status" value="1"/>
</dbReference>
<dbReference type="Pfam" id="PF00028">
    <property type="entry name" value="Cadherin"/>
    <property type="match status" value="9"/>
</dbReference>
<dbReference type="PRINTS" id="PR00205">
    <property type="entry name" value="CADHERIN"/>
</dbReference>
<dbReference type="SMART" id="SM00112">
    <property type="entry name" value="CA"/>
    <property type="match status" value="14"/>
</dbReference>
<dbReference type="SUPFAM" id="SSF49313">
    <property type="entry name" value="Cadherin-like"/>
    <property type="match status" value="14"/>
</dbReference>
<dbReference type="PROSITE" id="PS00232">
    <property type="entry name" value="CADHERIN_1"/>
    <property type="match status" value="3"/>
</dbReference>
<dbReference type="PROSITE" id="PS50268">
    <property type="entry name" value="CADHERIN_2"/>
    <property type="match status" value="14"/>
</dbReference>
<feature type="signal peptide" evidence="2">
    <location>
        <begin position="1"/>
        <end position="17"/>
    </location>
</feature>
<feature type="chain" id="PRO_0000004007" description="Cadherin-87A">
    <location>
        <begin position="18"/>
        <end position="1975"/>
    </location>
</feature>
<feature type="topological domain" description="Extracellular" evidence="2">
    <location>
        <begin position="18"/>
        <end position="1775"/>
    </location>
</feature>
<feature type="transmembrane region" description="Helical" evidence="2">
    <location>
        <begin position="1776"/>
        <end position="1796"/>
    </location>
</feature>
<feature type="topological domain" description="Cytoplasmic" evidence="2">
    <location>
        <begin position="1797"/>
        <end position="1975"/>
    </location>
</feature>
<feature type="domain" description="Cadherin 1" evidence="3">
    <location>
        <begin position="28"/>
        <end position="132"/>
    </location>
</feature>
<feature type="domain" description="Cadherin 2" evidence="3">
    <location>
        <begin position="133"/>
        <end position="245"/>
    </location>
</feature>
<feature type="domain" description="Cadherin 3" evidence="3">
    <location>
        <begin position="246"/>
        <end position="358"/>
    </location>
</feature>
<feature type="domain" description="Cadherin 4" evidence="3">
    <location>
        <begin position="359"/>
        <end position="472"/>
    </location>
</feature>
<feature type="domain" description="Cadherin 5" evidence="3">
    <location>
        <begin position="473"/>
        <end position="669"/>
    </location>
</feature>
<feature type="domain" description="Cadherin 6" evidence="3">
    <location>
        <begin position="670"/>
        <end position="774"/>
    </location>
</feature>
<feature type="domain" description="Cadherin 7" evidence="3">
    <location>
        <begin position="775"/>
        <end position="878"/>
    </location>
</feature>
<feature type="domain" description="Cadherin 8" evidence="3">
    <location>
        <begin position="879"/>
        <end position="998"/>
    </location>
</feature>
<feature type="domain" description="Cadherin 9" evidence="3">
    <location>
        <begin position="999"/>
        <end position="1103"/>
    </location>
</feature>
<feature type="domain" description="Cadherin 10" evidence="3">
    <location>
        <begin position="1104"/>
        <end position="1211"/>
    </location>
</feature>
<feature type="domain" description="Cadherin 11" evidence="3">
    <location>
        <begin position="1212"/>
        <end position="1318"/>
    </location>
</feature>
<feature type="domain" description="Cadherin 12" evidence="3">
    <location>
        <begin position="1319"/>
        <end position="1431"/>
    </location>
</feature>
<feature type="domain" description="Cadherin 13" evidence="3">
    <location>
        <begin position="1432"/>
        <end position="1553"/>
    </location>
</feature>
<feature type="domain" description="Cadherin 14" evidence="3">
    <location>
        <begin position="1554"/>
        <end position="1677"/>
    </location>
</feature>
<feature type="region of interest" description="Disordered" evidence="4">
    <location>
        <begin position="535"/>
        <end position="560"/>
    </location>
</feature>
<feature type="region of interest" description="Disordered" evidence="4">
    <location>
        <begin position="1887"/>
        <end position="1916"/>
    </location>
</feature>
<feature type="compositionally biased region" description="Basic and acidic residues" evidence="4">
    <location>
        <begin position="537"/>
        <end position="549"/>
    </location>
</feature>
<feature type="compositionally biased region" description="Acidic residues" evidence="4">
    <location>
        <begin position="550"/>
        <end position="560"/>
    </location>
</feature>
<feature type="compositionally biased region" description="Polar residues" evidence="4">
    <location>
        <begin position="1887"/>
        <end position="1899"/>
    </location>
</feature>
<feature type="compositionally biased region" description="Gly residues" evidence="4">
    <location>
        <begin position="1900"/>
        <end position="1916"/>
    </location>
</feature>
<feature type="glycosylation site" description="N-linked (GlcNAc...) asparagine" evidence="2">
    <location>
        <position position="39"/>
    </location>
</feature>
<feature type="glycosylation site" description="N-linked (GlcNAc...) asparagine" evidence="2">
    <location>
        <position position="77"/>
    </location>
</feature>
<feature type="glycosylation site" description="N-linked (GlcNAc...) asparagine" evidence="2">
    <location>
        <position position="203"/>
    </location>
</feature>
<feature type="glycosylation site" description="N-linked (GlcNAc...) asparagine" evidence="5">
    <location>
        <position position="424"/>
    </location>
</feature>
<feature type="glycosylation site" description="N-linked (GlcNAc...) asparagine" evidence="2">
    <location>
        <position position="730"/>
    </location>
</feature>
<feature type="glycosylation site" description="N-linked (GlcNAc...) asparagine" evidence="2">
    <location>
        <position position="761"/>
    </location>
</feature>
<feature type="glycosylation site" description="N-linked (GlcNAc...) asparagine" evidence="2">
    <location>
        <position position="1039"/>
    </location>
</feature>
<feature type="glycosylation site" description="N-linked (GlcNAc...) asparagine" evidence="2">
    <location>
        <position position="1049"/>
    </location>
</feature>
<feature type="glycosylation site" description="N-linked (GlcNAc...) asparagine" evidence="2">
    <location>
        <position position="1111"/>
    </location>
</feature>
<feature type="glycosylation site" description="N-linked (GlcNAc...) asparagine" evidence="2">
    <location>
        <position position="1163"/>
    </location>
</feature>
<feature type="glycosylation site" description="N-linked (GlcNAc...) asparagine" evidence="2">
    <location>
        <position position="1217"/>
    </location>
</feature>
<feature type="glycosylation site" description="N-linked (GlcNAc...) asparagine" evidence="2">
    <location>
        <position position="1325"/>
    </location>
</feature>
<feature type="glycosylation site" description="N-linked (GlcNAc...) asparagine" evidence="2">
    <location>
        <position position="1349"/>
    </location>
</feature>
<feature type="glycosylation site" description="N-linked (GlcNAc...) asparagine" evidence="2">
    <location>
        <position position="1492"/>
    </location>
</feature>
<feature type="glycosylation site" description="N-linked (GlcNAc...) asparagine" evidence="5">
    <location>
        <position position="1576"/>
    </location>
</feature>
<feature type="glycosylation site" description="N-linked (GlcNAc...) asparagine" evidence="2">
    <location>
        <position position="1691"/>
    </location>
</feature>
<feature type="sequence conflict" description="In Ref. 3; AAM75098." evidence="6" ref="3">
    <original>V</original>
    <variation>M</variation>
    <location>
        <position position="771"/>
    </location>
</feature>
<feature type="sequence conflict" description="In Ref. 3; AAM75098." evidence="6" ref="3">
    <original>F</original>
    <variation>S</variation>
    <location>
        <position position="1110"/>
    </location>
</feature>
<feature type="sequence conflict" description="In Ref. 3; AAM75098." evidence="6" ref="3">
    <original>S</original>
    <variation>R</variation>
    <location>
        <position position="1650"/>
    </location>
</feature>
<feature type="sequence conflict" description="In Ref. 3; AAM75098." evidence="6" ref="3">
    <original>R</original>
    <variation>C</variation>
    <location>
        <position position="1690"/>
    </location>
</feature>